<accession>A5IHU9</accession>
<dbReference type="EMBL" id="CP000675">
    <property type="protein sequence ID" value="ABQ56949.1"/>
    <property type="status" value="ALT_INIT"/>
    <property type="molecule type" value="Genomic_DNA"/>
</dbReference>
<dbReference type="RefSeq" id="WP_010948464.1">
    <property type="nucleotide sequence ID" value="NZ_JAPMSS010000004.1"/>
</dbReference>
<dbReference type="SMR" id="A5IHU9"/>
<dbReference type="GeneID" id="57036772"/>
<dbReference type="KEGG" id="lpc:LPC_3059"/>
<dbReference type="HOGENOM" id="CLU_070525_1_1_6"/>
<dbReference type="GO" id="GO:0005829">
    <property type="term" value="C:cytosol"/>
    <property type="evidence" value="ECO:0007669"/>
    <property type="project" value="TreeGrafter"/>
</dbReference>
<dbReference type="GO" id="GO:0000028">
    <property type="term" value="P:ribosomal small subunit assembly"/>
    <property type="evidence" value="ECO:0007669"/>
    <property type="project" value="TreeGrafter"/>
</dbReference>
<dbReference type="GO" id="GO:0006412">
    <property type="term" value="P:translation"/>
    <property type="evidence" value="ECO:0007669"/>
    <property type="project" value="TreeGrafter"/>
</dbReference>
<dbReference type="CDD" id="cd01734">
    <property type="entry name" value="YlxS_C"/>
    <property type="match status" value="1"/>
</dbReference>
<dbReference type="FunFam" id="3.30.300.70:FF:000001">
    <property type="entry name" value="Ribosome maturation factor RimP"/>
    <property type="match status" value="1"/>
</dbReference>
<dbReference type="Gene3D" id="2.30.30.180">
    <property type="entry name" value="Ribosome maturation factor RimP, C-terminal domain"/>
    <property type="match status" value="1"/>
</dbReference>
<dbReference type="Gene3D" id="3.30.300.70">
    <property type="entry name" value="RimP-like superfamily, N-terminal"/>
    <property type="match status" value="1"/>
</dbReference>
<dbReference type="HAMAP" id="MF_01077">
    <property type="entry name" value="RimP"/>
    <property type="match status" value="1"/>
</dbReference>
<dbReference type="InterPro" id="IPR003728">
    <property type="entry name" value="Ribosome_maturation_RimP"/>
</dbReference>
<dbReference type="InterPro" id="IPR028998">
    <property type="entry name" value="RimP_C"/>
</dbReference>
<dbReference type="InterPro" id="IPR036847">
    <property type="entry name" value="RimP_C_sf"/>
</dbReference>
<dbReference type="InterPro" id="IPR028989">
    <property type="entry name" value="RimP_N"/>
</dbReference>
<dbReference type="InterPro" id="IPR035956">
    <property type="entry name" value="RimP_N_sf"/>
</dbReference>
<dbReference type="NCBIfam" id="NF000927">
    <property type="entry name" value="PRK00092.1-1"/>
    <property type="match status" value="1"/>
</dbReference>
<dbReference type="PANTHER" id="PTHR33867">
    <property type="entry name" value="RIBOSOME MATURATION FACTOR RIMP"/>
    <property type="match status" value="1"/>
</dbReference>
<dbReference type="PANTHER" id="PTHR33867:SF1">
    <property type="entry name" value="RIBOSOME MATURATION FACTOR RIMP"/>
    <property type="match status" value="1"/>
</dbReference>
<dbReference type="Pfam" id="PF17384">
    <property type="entry name" value="DUF150_C"/>
    <property type="match status" value="1"/>
</dbReference>
<dbReference type="Pfam" id="PF02576">
    <property type="entry name" value="RimP_N"/>
    <property type="match status" value="1"/>
</dbReference>
<dbReference type="SUPFAM" id="SSF74942">
    <property type="entry name" value="YhbC-like, C-terminal domain"/>
    <property type="match status" value="1"/>
</dbReference>
<dbReference type="SUPFAM" id="SSF75420">
    <property type="entry name" value="YhbC-like, N-terminal domain"/>
    <property type="match status" value="1"/>
</dbReference>
<comment type="function">
    <text evidence="1">Required for maturation of 30S ribosomal subunits.</text>
</comment>
<comment type="subcellular location">
    <subcellularLocation>
        <location evidence="1">Cytoplasm</location>
    </subcellularLocation>
</comment>
<comment type="similarity">
    <text evidence="1">Belongs to the RimP family.</text>
</comment>
<comment type="sequence caution" evidence="2">
    <conflict type="erroneous initiation">
        <sequence resource="EMBL-CDS" id="ABQ56949"/>
    </conflict>
</comment>
<name>RIMP_LEGPC</name>
<organism>
    <name type="scientific">Legionella pneumophila (strain Corby)</name>
    <dbReference type="NCBI Taxonomy" id="400673"/>
    <lineage>
        <taxon>Bacteria</taxon>
        <taxon>Pseudomonadati</taxon>
        <taxon>Pseudomonadota</taxon>
        <taxon>Gammaproteobacteria</taxon>
        <taxon>Legionellales</taxon>
        <taxon>Legionellaceae</taxon>
        <taxon>Legionella</taxon>
    </lineage>
</organism>
<protein>
    <recommendedName>
        <fullName evidence="1">Ribosome maturation factor RimP</fullName>
    </recommendedName>
</protein>
<gene>
    <name evidence="1" type="primary">rimP</name>
    <name type="ordered locus">LPC_3059</name>
</gene>
<evidence type="ECO:0000255" key="1">
    <source>
        <dbReference type="HAMAP-Rule" id="MF_01077"/>
    </source>
</evidence>
<evidence type="ECO:0000305" key="2"/>
<keyword id="KW-0963">Cytoplasm</keyword>
<keyword id="KW-0690">Ribosome biogenesis</keyword>
<sequence length="147" mass="16624">MINDDLIVLLEPIIKNMGYELWGCEYLSQGKHSLLRIYIDKPDGIGIDDCQEVSKQVSAMLDVEDPIPGHYSLEISSPGIPRPLFSIWQYQRYLGYEIHVKTFKPVNGKRKLSGIIVSASEDTIVLDINNEHQEILLSNIVKANLTV</sequence>
<proteinExistence type="inferred from homology"/>
<feature type="chain" id="PRO_0000384694" description="Ribosome maturation factor RimP">
    <location>
        <begin position="1"/>
        <end position="147"/>
    </location>
</feature>
<reference key="1">
    <citation type="submission" date="2006-11" db="EMBL/GenBank/DDBJ databases">
        <title>Identification and characterization of a new conjugation/ type IVA secretion system (trb/tra) of L. pneumophila Corby localized on a mobile genomic island.</title>
        <authorList>
            <person name="Gloeckner G."/>
            <person name="Albert-Weissenberger C."/>
            <person name="Weinmann E."/>
            <person name="Jacobi S."/>
            <person name="Schunder E."/>
            <person name="Steinert M."/>
            <person name="Buchrieser C."/>
            <person name="Hacker J."/>
            <person name="Heuner K."/>
        </authorList>
    </citation>
    <scope>NUCLEOTIDE SEQUENCE [LARGE SCALE GENOMIC DNA]</scope>
    <source>
        <strain>Corby</strain>
    </source>
</reference>